<gene>
    <name type="primary">virF</name>
    <name type="ordered locus">YEP0035</name>
</gene>
<reference key="1">
    <citation type="journal article" date="2001" name="Infect. Immun.">
        <title>Complete DNA sequence of Yersinia enterocolitica serotype 0:8 low-calcium-response plasmid reveals a new virulence plasmid-associated replicon.</title>
        <authorList>
            <person name="Snellings N.J."/>
            <person name="Popek M."/>
            <person name="Lindler L.E."/>
        </authorList>
    </citation>
    <scope>NUCLEOTIDE SEQUENCE [GENOMIC DNA]</scope>
</reference>
<reference key="2">
    <citation type="journal article" date="2006" name="PLoS Genet.">
        <title>The complete genome sequence and comparative genome analysis of the high pathogenicity Yersinia enterocolitica strain 8081.</title>
        <authorList>
            <person name="Thomson N.R."/>
            <person name="Howard S."/>
            <person name="Wren B.W."/>
            <person name="Holden M.T.G."/>
            <person name="Crossman L."/>
            <person name="Challis G.L."/>
            <person name="Churcher C."/>
            <person name="Mungall K."/>
            <person name="Brooks K."/>
            <person name="Chillingworth T."/>
            <person name="Feltwell T."/>
            <person name="Abdellah Z."/>
            <person name="Hauser H."/>
            <person name="Jagels K."/>
            <person name="Maddison M."/>
            <person name="Moule S."/>
            <person name="Sanders M."/>
            <person name="Whitehead S."/>
            <person name="Quail M.A."/>
            <person name="Dougan G."/>
            <person name="Parkhill J."/>
            <person name="Prentice M.B."/>
        </authorList>
    </citation>
    <scope>NUCLEOTIDE SEQUENCE [LARGE SCALE GENOMIC DNA]</scope>
    <source>
        <strain>NCTC 13174 / 8081</strain>
    </source>
</reference>
<dbReference type="EMBL" id="AF336309">
    <property type="protein sequence ID" value="AAK69232.1"/>
    <property type="molecule type" value="Genomic_DNA"/>
</dbReference>
<dbReference type="EMBL" id="AM286416">
    <property type="protein sequence ID" value="CAL10057.1"/>
    <property type="molecule type" value="Genomic_DNA"/>
</dbReference>
<dbReference type="RefSeq" id="NP_783684.1">
    <property type="nucleotide sequence ID" value="NC_004564.1"/>
</dbReference>
<dbReference type="RefSeq" id="NP_863532.1">
    <property type="nucleotide sequence ID" value="NC_005017.1"/>
</dbReference>
<dbReference type="RefSeq" id="WP_005176447.1">
    <property type="nucleotide sequence ID" value="NC_008791.1"/>
</dbReference>
<dbReference type="RefSeq" id="YP_001004087.1">
    <property type="nucleotide sequence ID" value="NC_008791.1"/>
</dbReference>
<dbReference type="SMR" id="A1JU91"/>
<dbReference type="KEGG" id="yen:YEP0035"/>
<dbReference type="PATRIC" id="fig|393305.7.peg.36"/>
<dbReference type="eggNOG" id="COG2207">
    <property type="taxonomic scope" value="Bacteria"/>
</dbReference>
<dbReference type="HOGENOM" id="CLU_073843_2_0_6"/>
<dbReference type="OrthoDB" id="2547276at2"/>
<dbReference type="PRO" id="PR:A1JU91"/>
<dbReference type="Proteomes" id="UP000000642">
    <property type="component" value="Plasmid pYVe8081"/>
</dbReference>
<dbReference type="GO" id="GO:0003700">
    <property type="term" value="F:DNA-binding transcription factor activity"/>
    <property type="evidence" value="ECO:0007669"/>
    <property type="project" value="InterPro"/>
</dbReference>
<dbReference type="GO" id="GO:0043565">
    <property type="term" value="F:sequence-specific DNA binding"/>
    <property type="evidence" value="ECO:0007669"/>
    <property type="project" value="InterPro"/>
</dbReference>
<dbReference type="FunFam" id="1.10.10.60:FF:000386">
    <property type="entry name" value="AraC family transcriptional regulator"/>
    <property type="match status" value="1"/>
</dbReference>
<dbReference type="Gene3D" id="1.10.10.60">
    <property type="entry name" value="Homeodomain-like"/>
    <property type="match status" value="1"/>
</dbReference>
<dbReference type="InterPro" id="IPR050204">
    <property type="entry name" value="AraC_XylS_family_regulators"/>
</dbReference>
<dbReference type="InterPro" id="IPR054015">
    <property type="entry name" value="ExsA-like_N"/>
</dbReference>
<dbReference type="InterPro" id="IPR009057">
    <property type="entry name" value="Homeodomain-like_sf"/>
</dbReference>
<dbReference type="InterPro" id="IPR037923">
    <property type="entry name" value="HTH-like"/>
</dbReference>
<dbReference type="InterPro" id="IPR018060">
    <property type="entry name" value="HTH_AraC"/>
</dbReference>
<dbReference type="InterPro" id="IPR018062">
    <property type="entry name" value="HTH_AraC-typ_CS"/>
</dbReference>
<dbReference type="InterPro" id="IPR020449">
    <property type="entry name" value="Tscrpt_reg_AraC-type_HTH"/>
</dbReference>
<dbReference type="PANTHER" id="PTHR46796:SF6">
    <property type="entry name" value="ARAC SUBFAMILY"/>
    <property type="match status" value="1"/>
</dbReference>
<dbReference type="PANTHER" id="PTHR46796">
    <property type="entry name" value="HTH-TYPE TRANSCRIPTIONAL ACTIVATOR RHAS-RELATED"/>
    <property type="match status" value="1"/>
</dbReference>
<dbReference type="Pfam" id="PF22200">
    <property type="entry name" value="ExsA_N"/>
    <property type="match status" value="1"/>
</dbReference>
<dbReference type="Pfam" id="PF12833">
    <property type="entry name" value="HTH_18"/>
    <property type="match status" value="1"/>
</dbReference>
<dbReference type="PRINTS" id="PR00032">
    <property type="entry name" value="HTHARAC"/>
</dbReference>
<dbReference type="SMART" id="SM00342">
    <property type="entry name" value="HTH_ARAC"/>
    <property type="match status" value="1"/>
</dbReference>
<dbReference type="SUPFAM" id="SSF46689">
    <property type="entry name" value="Homeodomain-like"/>
    <property type="match status" value="1"/>
</dbReference>
<dbReference type="SUPFAM" id="SSF51215">
    <property type="entry name" value="Regulatory protein AraC"/>
    <property type="match status" value="1"/>
</dbReference>
<dbReference type="PROSITE" id="PS00041">
    <property type="entry name" value="HTH_ARAC_FAMILY_1"/>
    <property type="match status" value="1"/>
</dbReference>
<dbReference type="PROSITE" id="PS01124">
    <property type="entry name" value="HTH_ARAC_FAMILY_2"/>
    <property type="match status" value="1"/>
</dbReference>
<evidence type="ECO:0000250" key="1"/>
<evidence type="ECO:0000255" key="2">
    <source>
        <dbReference type="PROSITE-ProRule" id="PRU00593"/>
    </source>
</evidence>
<protein>
    <recommendedName>
        <fullName>Virulence regulon transcriptional activator VirF</fullName>
    </recommendedName>
</protein>
<comment type="function">
    <text evidence="1">Transcriptional activator of the Yersinia virulence regulon.</text>
</comment>
<proteinExistence type="inferred from homology"/>
<geneLocation type="plasmid">
    <name>pYVe8081</name>
</geneLocation>
<sequence>MASLEIIKLEWATPIFKVVEHSQDGLYILLQGQVSWQNSSQTYDLDEGNMLFLRRGSYAVRCGTKEPCQLLWIPLPGSFLSTFLHRFGSLLSEIRRDNSTPKPLLIFNISPILSQSIQNLCAILERSDFPSVLTQLRIEELLLLLAFSSQGTLFLSALRHLGNRPEERLQKFMEENYLQGWKLSKFAREFGMGLTTFKELFGTVYGISPRAWISERRILYAHQLLLNCKMSIVDIAMEAGFSSQSYFTQSYRRRFGCTPSQARLTKIATTG</sequence>
<keyword id="KW-0010">Activator</keyword>
<keyword id="KW-0238">DNA-binding</keyword>
<keyword id="KW-0614">Plasmid</keyword>
<keyword id="KW-0804">Transcription</keyword>
<keyword id="KW-0805">Transcription regulation</keyword>
<keyword id="KW-0843">Virulence</keyword>
<feature type="chain" id="PRO_0000285829" description="Virulence regulon transcriptional activator VirF">
    <location>
        <begin position="1"/>
        <end position="271"/>
    </location>
</feature>
<feature type="domain" description="HTH araC/xylS-type" evidence="2">
    <location>
        <begin position="167"/>
        <end position="265"/>
    </location>
</feature>
<feature type="DNA-binding region" description="H-T-H motif" evidence="2">
    <location>
        <begin position="184"/>
        <end position="205"/>
    </location>
</feature>
<feature type="DNA-binding region" description="H-T-H motif" evidence="2">
    <location>
        <begin position="232"/>
        <end position="255"/>
    </location>
</feature>
<accession>A1JU91</accession>
<accession>P13225</accession>
<accession>Q93KT3</accession>
<name>VIRF_YERE8</name>
<organism>
    <name type="scientific">Yersinia enterocolitica serotype O:8 / biotype 1B (strain NCTC 13174 / 8081)</name>
    <dbReference type="NCBI Taxonomy" id="393305"/>
    <lineage>
        <taxon>Bacteria</taxon>
        <taxon>Pseudomonadati</taxon>
        <taxon>Pseudomonadota</taxon>
        <taxon>Gammaproteobacteria</taxon>
        <taxon>Enterobacterales</taxon>
        <taxon>Yersiniaceae</taxon>
        <taxon>Yersinia</taxon>
    </lineage>
</organism>